<dbReference type="EMBL" id="AY596297">
    <property type="protein sequence ID" value="AAV46581.1"/>
    <property type="status" value="ALT_INIT"/>
    <property type="molecule type" value="Genomic_DNA"/>
</dbReference>
<dbReference type="PDB" id="1FFK">
    <property type="method" value="X-ray"/>
    <property type="resolution" value="2.40 A"/>
    <property type="chains" value="W=12-19"/>
</dbReference>
<dbReference type="PDB" id="1JJ2">
    <property type="method" value="X-ray"/>
    <property type="resolution" value="2.40 A"/>
    <property type="chains" value="Y=49-79"/>
</dbReference>
<dbReference type="PDB" id="1K73">
    <property type="method" value="X-ray"/>
    <property type="resolution" value="3.01 A"/>
    <property type="chains" value="1=49-79"/>
</dbReference>
<dbReference type="PDB" id="1K8A">
    <property type="method" value="X-ray"/>
    <property type="resolution" value="3.00 A"/>
    <property type="chains" value="1=49-79"/>
</dbReference>
<dbReference type="PDB" id="1K9M">
    <property type="method" value="X-ray"/>
    <property type="resolution" value="3.00 A"/>
    <property type="chains" value="1=49-79"/>
</dbReference>
<dbReference type="PDB" id="1KC8">
    <property type="method" value="X-ray"/>
    <property type="resolution" value="3.01 A"/>
    <property type="chains" value="1=49-79"/>
</dbReference>
<dbReference type="PDB" id="1KD1">
    <property type="method" value="X-ray"/>
    <property type="resolution" value="3.00 A"/>
    <property type="chains" value="1=49-79"/>
</dbReference>
<dbReference type="PDB" id="1KQS">
    <property type="method" value="X-ray"/>
    <property type="resolution" value="3.10 A"/>
    <property type="chains" value="Y=49-79"/>
</dbReference>
<dbReference type="PDB" id="1M1K">
    <property type="method" value="X-ray"/>
    <property type="resolution" value="3.20 A"/>
    <property type="chains" value="1=49-79"/>
</dbReference>
<dbReference type="PDB" id="1M90">
    <property type="method" value="X-ray"/>
    <property type="resolution" value="2.80 A"/>
    <property type="chains" value="1=49-79"/>
</dbReference>
<dbReference type="PDB" id="1N8R">
    <property type="method" value="X-ray"/>
    <property type="resolution" value="3.00 A"/>
    <property type="chains" value="1=49-79"/>
</dbReference>
<dbReference type="PDB" id="1NJI">
    <property type="method" value="X-ray"/>
    <property type="resolution" value="3.00 A"/>
    <property type="chains" value="1=49-79"/>
</dbReference>
<dbReference type="PDB" id="1Q7Y">
    <property type="method" value="X-ray"/>
    <property type="resolution" value="3.20 A"/>
    <property type="chains" value="1=49-79"/>
</dbReference>
<dbReference type="PDB" id="1Q81">
    <property type="method" value="X-ray"/>
    <property type="resolution" value="2.95 A"/>
    <property type="chains" value="1=49-79"/>
</dbReference>
<dbReference type="PDB" id="1Q82">
    <property type="method" value="X-ray"/>
    <property type="resolution" value="2.98 A"/>
    <property type="chains" value="1=49-79"/>
</dbReference>
<dbReference type="PDB" id="1Q86">
    <property type="method" value="X-ray"/>
    <property type="resolution" value="3.00 A"/>
    <property type="chains" value="1=49-79"/>
</dbReference>
<dbReference type="PDB" id="1QVF">
    <property type="method" value="X-ray"/>
    <property type="resolution" value="3.10 A"/>
    <property type="chains" value="Y=49-79"/>
</dbReference>
<dbReference type="PDB" id="1QVG">
    <property type="method" value="X-ray"/>
    <property type="resolution" value="2.90 A"/>
    <property type="chains" value="Y=49-79"/>
</dbReference>
<dbReference type="PDB" id="1S72">
    <property type="method" value="X-ray"/>
    <property type="resolution" value="2.40 A"/>
    <property type="chains" value="Z=11-82"/>
</dbReference>
<dbReference type="PDB" id="1VQ4">
    <property type="method" value="X-ray"/>
    <property type="resolution" value="2.70 A"/>
    <property type="chains" value="Z=11-92"/>
</dbReference>
<dbReference type="PDB" id="1VQ5">
    <property type="method" value="X-ray"/>
    <property type="resolution" value="2.60 A"/>
    <property type="chains" value="Z=11-92"/>
</dbReference>
<dbReference type="PDB" id="1VQ6">
    <property type="method" value="X-ray"/>
    <property type="resolution" value="2.70 A"/>
    <property type="chains" value="Z=11-92"/>
</dbReference>
<dbReference type="PDB" id="1VQ7">
    <property type="method" value="X-ray"/>
    <property type="resolution" value="2.50 A"/>
    <property type="chains" value="Z=11-92"/>
</dbReference>
<dbReference type="PDB" id="1VQ8">
    <property type="method" value="X-ray"/>
    <property type="resolution" value="2.20 A"/>
    <property type="chains" value="Z=11-92"/>
</dbReference>
<dbReference type="PDB" id="1VQ9">
    <property type="method" value="X-ray"/>
    <property type="resolution" value="2.40 A"/>
    <property type="chains" value="Z=11-92"/>
</dbReference>
<dbReference type="PDB" id="1VQK">
    <property type="method" value="X-ray"/>
    <property type="resolution" value="2.30 A"/>
    <property type="chains" value="Z=11-92"/>
</dbReference>
<dbReference type="PDB" id="1VQL">
    <property type="method" value="X-ray"/>
    <property type="resolution" value="2.30 A"/>
    <property type="chains" value="Z=11-92"/>
</dbReference>
<dbReference type="PDB" id="1VQM">
    <property type="method" value="X-ray"/>
    <property type="resolution" value="2.30 A"/>
    <property type="chains" value="Z=11-92"/>
</dbReference>
<dbReference type="PDB" id="1VQN">
    <property type="method" value="X-ray"/>
    <property type="resolution" value="2.40 A"/>
    <property type="chains" value="Z=11-92"/>
</dbReference>
<dbReference type="PDB" id="1VQO">
    <property type="method" value="X-ray"/>
    <property type="resolution" value="2.20 A"/>
    <property type="chains" value="Z=11-92"/>
</dbReference>
<dbReference type="PDB" id="1VQP">
    <property type="method" value="X-ray"/>
    <property type="resolution" value="2.25 A"/>
    <property type="chains" value="Z=11-92"/>
</dbReference>
<dbReference type="PDB" id="1W2B">
    <property type="method" value="X-ray"/>
    <property type="resolution" value="3.50 A"/>
    <property type="chains" value="Y=49-79"/>
</dbReference>
<dbReference type="PDB" id="1YHQ">
    <property type="method" value="X-ray"/>
    <property type="resolution" value="2.40 A"/>
    <property type="chains" value="Z=11-92"/>
</dbReference>
<dbReference type="PDB" id="1YI2">
    <property type="method" value="X-ray"/>
    <property type="resolution" value="2.65 A"/>
    <property type="chains" value="Z=11-92"/>
</dbReference>
<dbReference type="PDB" id="1YIJ">
    <property type="method" value="X-ray"/>
    <property type="resolution" value="2.60 A"/>
    <property type="chains" value="Z=11-92"/>
</dbReference>
<dbReference type="PDB" id="1YIT">
    <property type="method" value="X-ray"/>
    <property type="resolution" value="2.80 A"/>
    <property type="chains" value="Z=11-92"/>
</dbReference>
<dbReference type="PDB" id="1YJ9">
    <property type="method" value="X-ray"/>
    <property type="resolution" value="2.90 A"/>
    <property type="chains" value="Z=11-92"/>
</dbReference>
<dbReference type="PDB" id="1YJN">
    <property type="method" value="X-ray"/>
    <property type="resolution" value="3.00 A"/>
    <property type="chains" value="Z=11-92"/>
</dbReference>
<dbReference type="PDB" id="1YJW">
    <property type="method" value="X-ray"/>
    <property type="resolution" value="2.90 A"/>
    <property type="chains" value="Z=11-92"/>
</dbReference>
<dbReference type="PDB" id="2OTJ">
    <property type="method" value="X-ray"/>
    <property type="resolution" value="2.90 A"/>
    <property type="chains" value="Z=11-82"/>
</dbReference>
<dbReference type="PDB" id="2OTL">
    <property type="method" value="X-ray"/>
    <property type="resolution" value="2.70 A"/>
    <property type="chains" value="Z=11-82"/>
</dbReference>
<dbReference type="PDB" id="2QA4">
    <property type="method" value="X-ray"/>
    <property type="resolution" value="3.00 A"/>
    <property type="chains" value="Z=1-92"/>
</dbReference>
<dbReference type="PDB" id="2QEX">
    <property type="method" value="X-ray"/>
    <property type="resolution" value="2.90 A"/>
    <property type="chains" value="Z=11-82"/>
</dbReference>
<dbReference type="PDB" id="3CC2">
    <property type="method" value="X-ray"/>
    <property type="resolution" value="2.40 A"/>
    <property type="chains" value="Z=1-92"/>
</dbReference>
<dbReference type="PDB" id="3CC4">
    <property type="method" value="X-ray"/>
    <property type="resolution" value="2.70 A"/>
    <property type="chains" value="Z=1-92"/>
</dbReference>
<dbReference type="PDB" id="3CC7">
    <property type="method" value="X-ray"/>
    <property type="resolution" value="2.70 A"/>
    <property type="chains" value="Z=1-92"/>
</dbReference>
<dbReference type="PDB" id="3CCE">
    <property type="method" value="X-ray"/>
    <property type="resolution" value="2.75 A"/>
    <property type="chains" value="Z=1-92"/>
</dbReference>
<dbReference type="PDB" id="3CCJ">
    <property type="method" value="X-ray"/>
    <property type="resolution" value="2.70 A"/>
    <property type="chains" value="Z=1-92"/>
</dbReference>
<dbReference type="PDB" id="3CCL">
    <property type="method" value="X-ray"/>
    <property type="resolution" value="2.90 A"/>
    <property type="chains" value="Z=1-92"/>
</dbReference>
<dbReference type="PDB" id="3CCM">
    <property type="method" value="X-ray"/>
    <property type="resolution" value="2.55 A"/>
    <property type="chains" value="Z=1-92"/>
</dbReference>
<dbReference type="PDB" id="3CCQ">
    <property type="method" value="X-ray"/>
    <property type="resolution" value="2.90 A"/>
    <property type="chains" value="Z=1-92"/>
</dbReference>
<dbReference type="PDB" id="3CCR">
    <property type="method" value="X-ray"/>
    <property type="resolution" value="3.00 A"/>
    <property type="chains" value="Z=1-92"/>
</dbReference>
<dbReference type="PDB" id="3CCS">
    <property type="method" value="X-ray"/>
    <property type="resolution" value="2.95 A"/>
    <property type="chains" value="Z=1-92"/>
</dbReference>
<dbReference type="PDB" id="3CCU">
    <property type="method" value="X-ray"/>
    <property type="resolution" value="2.80 A"/>
    <property type="chains" value="Z=1-92"/>
</dbReference>
<dbReference type="PDB" id="3CCV">
    <property type="method" value="X-ray"/>
    <property type="resolution" value="2.90 A"/>
    <property type="chains" value="Z=1-92"/>
</dbReference>
<dbReference type="PDB" id="3CD6">
    <property type="method" value="X-ray"/>
    <property type="resolution" value="2.75 A"/>
    <property type="chains" value="Z=1-92"/>
</dbReference>
<dbReference type="PDB" id="3CMA">
    <property type="method" value="X-ray"/>
    <property type="resolution" value="2.80 A"/>
    <property type="chains" value="Z=1-92"/>
</dbReference>
<dbReference type="PDB" id="3CME">
    <property type="method" value="X-ray"/>
    <property type="resolution" value="2.95 A"/>
    <property type="chains" value="Z=1-92"/>
</dbReference>
<dbReference type="PDB" id="3CPW">
    <property type="method" value="X-ray"/>
    <property type="resolution" value="2.70 A"/>
    <property type="chains" value="Y=1-92"/>
</dbReference>
<dbReference type="PDB" id="3G4S">
    <property type="method" value="X-ray"/>
    <property type="resolution" value="3.20 A"/>
    <property type="chains" value="Z=10-82"/>
</dbReference>
<dbReference type="PDB" id="3G6E">
    <property type="method" value="X-ray"/>
    <property type="resolution" value="2.70 A"/>
    <property type="chains" value="Z=10-82"/>
</dbReference>
<dbReference type="PDB" id="3G71">
    <property type="method" value="X-ray"/>
    <property type="resolution" value="2.85 A"/>
    <property type="chains" value="Z=10-82"/>
</dbReference>
<dbReference type="PDB" id="3I55">
    <property type="method" value="X-ray"/>
    <property type="resolution" value="3.11 A"/>
    <property type="chains" value="Z=1-92"/>
</dbReference>
<dbReference type="PDB" id="3I56">
    <property type="method" value="X-ray"/>
    <property type="resolution" value="2.90 A"/>
    <property type="chains" value="Z=1-92"/>
</dbReference>
<dbReference type="PDB" id="4ADX">
    <property type="method" value="EM"/>
    <property type="resolution" value="6.60 A"/>
    <property type="chains" value="Z=1-92"/>
</dbReference>
<dbReference type="PDB" id="4V9F">
    <property type="method" value="X-ray"/>
    <property type="resolution" value="2.40 A"/>
    <property type="chains" value="Z=1-92"/>
</dbReference>
<dbReference type="PDBsum" id="1FFK"/>
<dbReference type="PDBsum" id="1JJ2"/>
<dbReference type="PDBsum" id="1K73"/>
<dbReference type="PDBsum" id="1K8A"/>
<dbReference type="PDBsum" id="1K9M"/>
<dbReference type="PDBsum" id="1KC8"/>
<dbReference type="PDBsum" id="1KD1"/>
<dbReference type="PDBsum" id="1KQS"/>
<dbReference type="PDBsum" id="1M1K"/>
<dbReference type="PDBsum" id="1M90"/>
<dbReference type="PDBsum" id="1N8R"/>
<dbReference type="PDBsum" id="1NJI"/>
<dbReference type="PDBsum" id="1Q7Y"/>
<dbReference type="PDBsum" id="1Q81"/>
<dbReference type="PDBsum" id="1Q82"/>
<dbReference type="PDBsum" id="1Q86"/>
<dbReference type="PDBsum" id="1QVF"/>
<dbReference type="PDBsum" id="1QVG"/>
<dbReference type="PDBsum" id="1S72"/>
<dbReference type="PDBsum" id="1VQ4"/>
<dbReference type="PDBsum" id="1VQ5"/>
<dbReference type="PDBsum" id="1VQ6"/>
<dbReference type="PDBsum" id="1VQ7"/>
<dbReference type="PDBsum" id="1VQ8"/>
<dbReference type="PDBsum" id="1VQ9"/>
<dbReference type="PDBsum" id="1VQK"/>
<dbReference type="PDBsum" id="1VQL"/>
<dbReference type="PDBsum" id="1VQM"/>
<dbReference type="PDBsum" id="1VQN"/>
<dbReference type="PDBsum" id="1VQO"/>
<dbReference type="PDBsum" id="1VQP"/>
<dbReference type="PDBsum" id="1W2B"/>
<dbReference type="PDBsum" id="1YHQ"/>
<dbReference type="PDBsum" id="1YI2"/>
<dbReference type="PDBsum" id="1YIJ"/>
<dbReference type="PDBsum" id="1YIT"/>
<dbReference type="PDBsum" id="1YJ9"/>
<dbReference type="PDBsum" id="1YJN"/>
<dbReference type="PDBsum" id="1YJW"/>
<dbReference type="PDBsum" id="2OTJ"/>
<dbReference type="PDBsum" id="2OTL"/>
<dbReference type="PDBsum" id="2QA4"/>
<dbReference type="PDBsum" id="2QEX"/>
<dbReference type="PDBsum" id="3CC2"/>
<dbReference type="PDBsum" id="3CC4"/>
<dbReference type="PDBsum" id="3CC7"/>
<dbReference type="PDBsum" id="3CCE"/>
<dbReference type="PDBsum" id="3CCJ"/>
<dbReference type="PDBsum" id="3CCL"/>
<dbReference type="PDBsum" id="3CCM"/>
<dbReference type="PDBsum" id="3CCQ"/>
<dbReference type="PDBsum" id="3CCR"/>
<dbReference type="PDBsum" id="3CCS"/>
<dbReference type="PDBsum" id="3CCU"/>
<dbReference type="PDBsum" id="3CCV"/>
<dbReference type="PDBsum" id="3CD6"/>
<dbReference type="PDBsum" id="3CMA"/>
<dbReference type="PDBsum" id="3CME"/>
<dbReference type="PDBsum" id="3CPW"/>
<dbReference type="PDBsum" id="3G4S"/>
<dbReference type="PDBsum" id="3G6E"/>
<dbReference type="PDBsum" id="3G71"/>
<dbReference type="PDBsum" id="3I55"/>
<dbReference type="PDBsum" id="3I56"/>
<dbReference type="PDBsum" id="4ADX"/>
<dbReference type="PDBsum" id="4V9F"/>
<dbReference type="SMR" id="P60619"/>
<dbReference type="IntAct" id="P60619">
    <property type="interactions" value="2"/>
</dbReference>
<dbReference type="STRING" id="272569.rrnAC1669"/>
<dbReference type="PaxDb" id="272569-rrnAC1669"/>
<dbReference type="EnsemblBacteria" id="AAV46581">
    <property type="protein sequence ID" value="AAV46581"/>
    <property type="gene ID" value="rrnAC1669"/>
</dbReference>
<dbReference type="KEGG" id="hma:rrnAC1669"/>
<dbReference type="PATRIC" id="fig|272569.17.peg.2356"/>
<dbReference type="eggNOG" id="arCOG04208">
    <property type="taxonomic scope" value="Archaea"/>
</dbReference>
<dbReference type="HOGENOM" id="CLU_141199_2_0_2"/>
<dbReference type="EvolutionaryTrace" id="P60619"/>
<dbReference type="Proteomes" id="UP000001169">
    <property type="component" value="Chromosome I"/>
</dbReference>
<dbReference type="GO" id="GO:1990904">
    <property type="term" value="C:ribonucleoprotein complex"/>
    <property type="evidence" value="ECO:0007669"/>
    <property type="project" value="UniProtKB-KW"/>
</dbReference>
<dbReference type="GO" id="GO:0005840">
    <property type="term" value="C:ribosome"/>
    <property type="evidence" value="ECO:0007669"/>
    <property type="project" value="UniProtKB-KW"/>
</dbReference>
<dbReference type="GO" id="GO:0070180">
    <property type="term" value="F:large ribosomal subunit rRNA binding"/>
    <property type="evidence" value="ECO:0007669"/>
    <property type="project" value="UniProtKB-UniRule"/>
</dbReference>
<dbReference type="GO" id="GO:0003735">
    <property type="term" value="F:structural constituent of ribosome"/>
    <property type="evidence" value="ECO:0007669"/>
    <property type="project" value="InterPro"/>
</dbReference>
<dbReference type="GO" id="GO:0008270">
    <property type="term" value="F:zinc ion binding"/>
    <property type="evidence" value="ECO:0007669"/>
    <property type="project" value="UniProtKB-UniRule"/>
</dbReference>
<dbReference type="GO" id="GO:0006412">
    <property type="term" value="P:translation"/>
    <property type="evidence" value="ECO:0007669"/>
    <property type="project" value="UniProtKB-UniRule"/>
</dbReference>
<dbReference type="Gene3D" id="2.20.25.30">
    <property type="match status" value="1"/>
</dbReference>
<dbReference type="HAMAP" id="MF_00327">
    <property type="entry name" value="Ribosomal_eL43"/>
    <property type="match status" value="1"/>
</dbReference>
<dbReference type="InterPro" id="IPR011331">
    <property type="entry name" value="Ribosomal_eL37/eL43"/>
</dbReference>
<dbReference type="InterPro" id="IPR002674">
    <property type="entry name" value="Ribosomal_eL43"/>
</dbReference>
<dbReference type="InterPro" id="IPR050522">
    <property type="entry name" value="Ribosomal_protein_eL43"/>
</dbReference>
<dbReference type="InterPro" id="IPR011332">
    <property type="entry name" value="Ribosomal_zn-bd"/>
</dbReference>
<dbReference type="NCBIfam" id="TIGR00280">
    <property type="entry name" value="eL43_euk_arch"/>
    <property type="match status" value="1"/>
</dbReference>
<dbReference type="NCBIfam" id="NF003058">
    <property type="entry name" value="PRK03976.1"/>
    <property type="match status" value="1"/>
</dbReference>
<dbReference type="PANTHER" id="PTHR48129">
    <property type="entry name" value="60S RIBOSOMAL PROTEIN L37A"/>
    <property type="match status" value="1"/>
</dbReference>
<dbReference type="PANTHER" id="PTHR48129:SF1">
    <property type="entry name" value="LARGE RIBOSOMAL SUBUNIT PROTEIN EL43"/>
    <property type="match status" value="1"/>
</dbReference>
<dbReference type="Pfam" id="PF01780">
    <property type="entry name" value="Ribosomal_L37ae"/>
    <property type="match status" value="1"/>
</dbReference>
<dbReference type="SUPFAM" id="SSF57829">
    <property type="entry name" value="Zn-binding ribosomal proteins"/>
    <property type="match status" value="1"/>
</dbReference>
<protein>
    <recommendedName>
        <fullName evidence="1">Large ribosomal subunit protein eL43</fullName>
    </recommendedName>
    <alternativeName>
        <fullName evidence="4">50S ribosomal protein L37Ae</fullName>
    </alternativeName>
    <alternativeName>
        <fullName evidence="1">Ribosomal protein L43e</fullName>
    </alternativeName>
</protein>
<accession>P60619</accession>
<accession>Q5V1M1</accession>
<comment type="function">
    <text>Binds to the 23S rRNA.</text>
</comment>
<comment type="cofactor">
    <cofactor evidence="4">
        <name>Zn(2+)</name>
        <dbReference type="ChEBI" id="CHEBI:29105"/>
    </cofactor>
    <text evidence="4">Binds 1 zinc ion per subunit.</text>
</comment>
<comment type="subunit">
    <text evidence="1 2 3">Part of the 50S ribosomal subunit. Contacts protein L2.</text>
</comment>
<comment type="similarity">
    <text evidence="1">Belongs to the eukaryotic ribosomal protein eL43 family. Putative zinc-binding subfamily.</text>
</comment>
<comment type="sequence caution" evidence="4">
    <conflict type="erroneous initiation">
        <sequence resource="EMBL-CDS" id="AAV46581"/>
    </conflict>
    <text>Extended N-terminus.</text>
</comment>
<feature type="chain" id="PRO_0000139841" description="Large ribosomal subunit protein eL43">
    <location>
        <begin position="1"/>
        <end position="92"/>
    </location>
</feature>
<feature type="zinc finger region" description="C4-type" evidence="1">
    <location>
        <begin position="39"/>
        <end position="60"/>
    </location>
</feature>
<feature type="binding site" evidence="1">
    <location>
        <position position="39"/>
    </location>
    <ligand>
        <name>Zn(2+)</name>
        <dbReference type="ChEBI" id="CHEBI:29105"/>
    </ligand>
</feature>
<feature type="binding site" evidence="1">
    <location>
        <position position="42"/>
    </location>
    <ligand>
        <name>Zn(2+)</name>
        <dbReference type="ChEBI" id="CHEBI:29105"/>
    </ligand>
</feature>
<feature type="binding site" evidence="1">
    <location>
        <position position="57"/>
    </location>
    <ligand>
        <name>Zn(2+)</name>
        <dbReference type="ChEBI" id="CHEBI:29105"/>
    </ligand>
</feature>
<feature type="binding site" evidence="1">
    <location>
        <position position="60"/>
    </location>
    <ligand>
        <name>Zn(2+)</name>
        <dbReference type="ChEBI" id="CHEBI:29105"/>
    </ligand>
</feature>
<feature type="helix" evidence="5">
    <location>
        <begin position="11"/>
        <end position="14"/>
    </location>
</feature>
<feature type="helix" evidence="5">
    <location>
        <begin position="20"/>
        <end position="34"/>
    </location>
</feature>
<feature type="strand" evidence="6">
    <location>
        <begin position="37"/>
        <end position="39"/>
    </location>
</feature>
<feature type="strand" evidence="5">
    <location>
        <begin position="40"/>
        <end position="42"/>
    </location>
</feature>
<feature type="strand" evidence="5">
    <location>
        <begin position="45"/>
        <end position="51"/>
    </location>
</feature>
<feature type="strand" evidence="5">
    <location>
        <begin position="54"/>
        <end position="57"/>
    </location>
</feature>
<feature type="turn" evidence="5">
    <location>
        <begin position="58"/>
        <end position="60"/>
    </location>
</feature>
<feature type="strand" evidence="5">
    <location>
        <begin position="63"/>
        <end position="65"/>
    </location>
</feature>
<feature type="strand" evidence="5">
    <location>
        <begin position="68"/>
        <end position="72"/>
    </location>
</feature>
<feature type="helix" evidence="5">
    <location>
        <begin position="74"/>
        <end position="81"/>
    </location>
</feature>
<gene>
    <name evidence="1" type="primary">rpl37ae</name>
    <name type="ordered locus">rrnAC1669</name>
</gene>
<organism>
    <name type="scientific">Haloarcula marismortui (strain ATCC 43049 / DSM 3752 / JCM 8966 / VKM B-1809)</name>
    <name type="common">Halobacterium marismortui</name>
    <dbReference type="NCBI Taxonomy" id="272569"/>
    <lineage>
        <taxon>Archaea</taxon>
        <taxon>Methanobacteriati</taxon>
        <taxon>Methanobacteriota</taxon>
        <taxon>Stenosarchaea group</taxon>
        <taxon>Halobacteria</taxon>
        <taxon>Halobacteriales</taxon>
        <taxon>Haloarculaceae</taxon>
        <taxon>Haloarcula</taxon>
    </lineage>
</organism>
<sequence>MASKSGKTGSSGRFGARYGRVSRRRVAEIESEMNEDHACPNCGEDRVDRQGTGIWQCSYCDYKFTGGSYKPETPGGKTVRRSIRAALSEDEE</sequence>
<keyword id="KW-0002">3D-structure</keyword>
<keyword id="KW-0479">Metal-binding</keyword>
<keyword id="KW-1185">Reference proteome</keyword>
<keyword id="KW-0687">Ribonucleoprotein</keyword>
<keyword id="KW-0689">Ribosomal protein</keyword>
<keyword id="KW-0694">RNA-binding</keyword>
<keyword id="KW-0699">rRNA-binding</keyword>
<keyword id="KW-0862">Zinc</keyword>
<keyword id="KW-0863">Zinc-finger</keyword>
<proteinExistence type="evidence at protein level"/>
<evidence type="ECO:0000255" key="1">
    <source>
        <dbReference type="HAMAP-Rule" id="MF_00327"/>
    </source>
</evidence>
<evidence type="ECO:0000269" key="2">
    <source>
    </source>
</evidence>
<evidence type="ECO:0000269" key="3">
    <source>
    </source>
</evidence>
<evidence type="ECO:0000305" key="4"/>
<evidence type="ECO:0007829" key="5">
    <source>
        <dbReference type="PDB" id="1VQ8"/>
    </source>
</evidence>
<evidence type="ECO:0007829" key="6">
    <source>
        <dbReference type="PDB" id="3CCJ"/>
    </source>
</evidence>
<reference key="1">
    <citation type="journal article" date="2004" name="Genome Res.">
        <title>Genome sequence of Haloarcula marismortui: a halophilic archaeon from the Dead Sea.</title>
        <authorList>
            <person name="Baliga N.S."/>
            <person name="Bonneau R."/>
            <person name="Facciotti M.T."/>
            <person name="Pan M."/>
            <person name="Glusman G."/>
            <person name="Deutsch E.W."/>
            <person name="Shannon P."/>
            <person name="Chiu Y."/>
            <person name="Weng R.S."/>
            <person name="Gan R.R."/>
            <person name="Hung P."/>
            <person name="Date S.V."/>
            <person name="Marcotte E."/>
            <person name="Hood L."/>
            <person name="Ng W.V."/>
        </authorList>
    </citation>
    <scope>NUCLEOTIDE SEQUENCE [LARGE SCALE GENOMIC DNA]</scope>
    <source>
        <strain>ATCC 43049 / DSM 3752 / JCM 8966 / VKM B-1809</strain>
    </source>
</reference>
<reference key="2">
    <citation type="journal article" date="2000" name="Science">
        <title>The complete atomic structure of the large ribosomal subunit at 2.4 A resolution.</title>
        <authorList>
            <person name="Ban N."/>
            <person name="Nissen P."/>
            <person name="Hansen J."/>
            <person name="Moore P.B."/>
            <person name="Steitz T.A."/>
        </authorList>
    </citation>
    <scope>X-RAY CRYSTALLOGRAPHY (2.4 ANGSTROMS) OF THE 50S SUBUNIT</scope>
    <source>
        <strain>ATCC 43049 / DSM 3752 / JCM 8966 / VKM B-1809</strain>
    </source>
</reference>
<reference key="3">
    <citation type="journal article" date="2000" name="Science">
        <title>The structural basis of ribosome activity in peptide bond synthesis.</title>
        <authorList>
            <person name="Nissen P."/>
            <person name="Hansen J."/>
            <person name="Ban N."/>
            <person name="Moore P.B."/>
            <person name="Steitz T.A."/>
        </authorList>
    </citation>
    <scope>X-RAY CRYSTALLOGRAPHY (3.0 ANGSTROMS) OF THE 50S SUBUNIT</scope>
    <source>
        <strain>ATCC 43049 / DSM 3752 / JCM 8966 / VKM B-1809</strain>
    </source>
</reference>
<reference key="4">
    <citation type="journal article" date="2002" name="Nat. Struct. Biol.">
        <title>A pre-translocational intermediate in protein synthesis observed in crystals of enzymatically active 50S subunits.</title>
        <authorList>
            <person name="Schmeing T.M."/>
            <person name="Seila A.C."/>
            <person name="Hansen J.L."/>
            <person name="Freeborn B."/>
            <person name="Soukup J.K."/>
            <person name="Scaringe S.A."/>
            <person name="Strobel S.A."/>
            <person name="Moore P.B."/>
            <person name="Steitz T.A."/>
        </authorList>
    </citation>
    <scope>X-RAY CRYSTALLOGRAPHY (3.1 ANGSTROMS) OF THE 50S SUBUNIT</scope>
    <source>
        <strain>ATCC 43049 / DSM 3752 / JCM 8966 / VKM B-1809</strain>
    </source>
</reference>
<reference key="5">
    <citation type="journal article" date="2001" name="EMBO J.">
        <title>The kink-turn: a new RNA secondary structure motif.</title>
        <authorList>
            <person name="Klein D.J."/>
            <person name="Schmeing T.M."/>
            <person name="Moore P.B."/>
            <person name="Steitz T.A."/>
        </authorList>
    </citation>
    <scope>X-RAY CRYSTALLOGRAPHY (2.4 ANGSTROMS) OF THE 50S SUBUNIT</scope>
    <source>
        <strain>ATCC 43049 / DSM 3752 / JCM 8966 / VKM B-1809</strain>
    </source>
</reference>
<reference key="6">
    <citation type="journal article" date="2002" name="Mol. Cell">
        <title>The structures of four macrolide antibiotics bound to the large ribosomal subunit.</title>
        <authorList>
            <person name="Hansen J.L."/>
            <person name="Ippolito J.A."/>
            <person name="Ban N."/>
            <person name="Nissen P."/>
            <person name="Moore P.B."/>
            <person name="Steitz T.A."/>
        </authorList>
    </citation>
    <scope>X-RAY CRYSTALLOGRAPHY (3.0 ANGSTROMS) OF THE 50S SUBUNIT IN COMPLEX WITH FOUR MACROLIDE ANTIBIOTICS</scope>
    <source>
        <strain>ATCC 43049 / DSM 3752 / JCM 8966 / VKM B-1809</strain>
    </source>
</reference>
<reference key="7">
    <citation type="journal article" date="2002" name="Proc. Natl. Acad. Sci. U.S.A.">
        <title>Structural insights into peptide bond formation.</title>
        <authorList>
            <person name="Hansen J.L."/>
            <person name="Schmeing T.M."/>
            <person name="Moore P.B."/>
            <person name="Steitz T.A."/>
        </authorList>
    </citation>
    <scope>X-RAY CRYSTALLOGRAPHY (2.8 ANGSTROMS) OF THE 50S SUBUNIT</scope>
    <source>
        <strain>ATCC 43049 / DSM 3752 / JCM 8966 / VKM B-1809</strain>
    </source>
</reference>
<reference key="8">
    <citation type="journal article" date="2003" name="J. Mol. Biol.">
        <title>Structures of five antibiotics bound at the peptidyl transferase center of the large ribosomal subunit.</title>
        <authorList>
            <person name="Hansen J.L."/>
            <person name="Moore P.B."/>
            <person name="Steitz T.A."/>
        </authorList>
    </citation>
    <scope>X-RAY CRYSTALLOGRAPHY (3.0 ANGSTROMS) OF THE 50S SUBUNIT IN COMPLEX WITH FIVE ANTIBIOTICS AT THE PEPTIDYL TRANSFERASE CENTER</scope>
    <source>
        <strain>ATCC 43049 / DSM 3752 / JCM 8966 / VKM B-1809</strain>
    </source>
</reference>
<reference key="9">
    <citation type="journal article" date="2003" name="RNA">
        <title>Structures of deacylated tRNA mimics bound to the E site of the large ribosomal subunit.</title>
        <authorList>
            <person name="Schmeing T.M."/>
            <person name="Moore P.B."/>
            <person name="Steitz T.A."/>
        </authorList>
    </citation>
    <scope>X-RAY CRYSTALLOGRAPHY (2.9 ANGSTROMS) OF THE 50S SUBUNIT WITH TWO DIFFERENT E SITE SUBSTRATES</scope>
</reference>
<reference key="10">
    <citation type="journal article" date="2013" name="Acta Crystallogr. D">
        <title>Revisiting the Haloarcula marismortui 50S ribosomal subunit model.</title>
        <authorList>
            <person name="Gabdulkhakov A."/>
            <person name="Nikonov S."/>
            <person name="Garber M."/>
        </authorList>
    </citation>
    <scope>X-RAY CRYSTALLOGRAPHY (2.4 ANGSTROMS) OF THE 50S SUBUNIT</scope>
</reference>
<name>RL37A_HALMA</name>